<accession>A7ZZ82</accession>
<feature type="chain" id="PRO_1000061095" description="Peptidase T">
    <location>
        <begin position="1"/>
        <end position="408"/>
    </location>
</feature>
<feature type="active site" evidence="1">
    <location>
        <position position="80"/>
    </location>
</feature>
<feature type="active site" description="Proton acceptor" evidence="1">
    <location>
        <position position="173"/>
    </location>
</feature>
<feature type="binding site" evidence="1">
    <location>
        <position position="78"/>
    </location>
    <ligand>
        <name>Zn(2+)</name>
        <dbReference type="ChEBI" id="CHEBI:29105"/>
        <label>1</label>
    </ligand>
</feature>
<feature type="binding site" evidence="1">
    <location>
        <position position="140"/>
    </location>
    <ligand>
        <name>Zn(2+)</name>
        <dbReference type="ChEBI" id="CHEBI:29105"/>
        <label>1</label>
    </ligand>
</feature>
<feature type="binding site" evidence="1">
    <location>
        <position position="140"/>
    </location>
    <ligand>
        <name>Zn(2+)</name>
        <dbReference type="ChEBI" id="CHEBI:29105"/>
        <label>2</label>
    </ligand>
</feature>
<feature type="binding site" evidence="1">
    <location>
        <position position="174"/>
    </location>
    <ligand>
        <name>Zn(2+)</name>
        <dbReference type="ChEBI" id="CHEBI:29105"/>
        <label>2</label>
    </ligand>
</feature>
<feature type="binding site" evidence="1">
    <location>
        <position position="196"/>
    </location>
    <ligand>
        <name>Zn(2+)</name>
        <dbReference type="ChEBI" id="CHEBI:29105"/>
        <label>1</label>
    </ligand>
</feature>
<feature type="binding site" evidence="1">
    <location>
        <position position="379"/>
    </location>
    <ligand>
        <name>Zn(2+)</name>
        <dbReference type="ChEBI" id="CHEBI:29105"/>
        <label>2</label>
    </ligand>
</feature>
<name>PEPT_ECOHS</name>
<keyword id="KW-0031">Aminopeptidase</keyword>
<keyword id="KW-0963">Cytoplasm</keyword>
<keyword id="KW-0378">Hydrolase</keyword>
<keyword id="KW-0479">Metal-binding</keyword>
<keyword id="KW-0482">Metalloprotease</keyword>
<keyword id="KW-0645">Protease</keyword>
<keyword id="KW-0862">Zinc</keyword>
<sequence>MDKLLERFLNYVSLDTQSKAGVRQVPSTEGQWKLLHLLKEQLEEMGLINVTLSEKGTLMATLPANVPGDIPAIGFISHVDTSPDCSGKNVNPQIVENYRGGDIALGIGDEVLSPVMFPVLHQLLGQTLITTDGKTLLGADDKAGIAEIMTALAVLQQKNIPHGDIRVAFTPDEEVGKGAKHFDVDAFDARWAYTVDGGGVGELEFENFNAASVNIKIVGNNVHPGTAKGVMVNALSLAARIHAEVPADESPEMTEGYEGFYHLASMKGTVDRADMHYIIRDFDRKQFEARKRKMMEIAKKVGKGLHPDCYIELVIEDSYYNMREKVVEHPHILDIAQQAMRDCDIEPELKPIRGGTDGAQLSFMGLPCPNLFTGGYNYHGKHEFVTLEGMEKAVQVIVRIAELTAQRK</sequence>
<proteinExistence type="inferred from homology"/>
<evidence type="ECO:0000255" key="1">
    <source>
        <dbReference type="HAMAP-Rule" id="MF_00550"/>
    </source>
</evidence>
<protein>
    <recommendedName>
        <fullName evidence="1">Peptidase T</fullName>
        <ecNumber evidence="1">3.4.11.4</ecNumber>
    </recommendedName>
    <alternativeName>
        <fullName evidence="1">Aminotripeptidase</fullName>
        <shortName evidence="1">Tripeptidase</shortName>
    </alternativeName>
    <alternativeName>
        <fullName evidence="1">Tripeptide aminopeptidase</fullName>
    </alternativeName>
</protein>
<comment type="function">
    <text evidence="1">Cleaves the N-terminal amino acid of tripeptides.</text>
</comment>
<comment type="catalytic activity">
    <reaction evidence="1">
        <text>Release of the N-terminal residue from a tripeptide.</text>
        <dbReference type="EC" id="3.4.11.4"/>
    </reaction>
</comment>
<comment type="cofactor">
    <cofactor evidence="1">
        <name>Zn(2+)</name>
        <dbReference type="ChEBI" id="CHEBI:29105"/>
    </cofactor>
    <text evidence="1">Binds 2 Zn(2+) ions per subunit.</text>
</comment>
<comment type="subcellular location">
    <subcellularLocation>
        <location evidence="1">Cytoplasm</location>
    </subcellularLocation>
</comment>
<comment type="similarity">
    <text evidence="1">Belongs to the peptidase M20B family.</text>
</comment>
<gene>
    <name evidence="1" type="primary">pepT</name>
    <name type="ordered locus">EcHS_A1247</name>
</gene>
<dbReference type="EC" id="3.4.11.4" evidence="1"/>
<dbReference type="EMBL" id="CP000802">
    <property type="protein sequence ID" value="ABV05586.1"/>
    <property type="molecule type" value="Genomic_DNA"/>
</dbReference>
<dbReference type="RefSeq" id="WP_000359441.1">
    <property type="nucleotide sequence ID" value="NC_009800.1"/>
</dbReference>
<dbReference type="SMR" id="A7ZZ82"/>
<dbReference type="MEROPS" id="M20.003"/>
<dbReference type="KEGG" id="ecx:EcHS_A1247"/>
<dbReference type="HOGENOM" id="CLU_053676_0_0_6"/>
<dbReference type="GO" id="GO:0005829">
    <property type="term" value="C:cytosol"/>
    <property type="evidence" value="ECO:0007669"/>
    <property type="project" value="TreeGrafter"/>
</dbReference>
<dbReference type="GO" id="GO:0008237">
    <property type="term" value="F:metallopeptidase activity"/>
    <property type="evidence" value="ECO:0007669"/>
    <property type="project" value="UniProtKB-KW"/>
</dbReference>
<dbReference type="GO" id="GO:0045148">
    <property type="term" value="F:tripeptide aminopeptidase activity"/>
    <property type="evidence" value="ECO:0007669"/>
    <property type="project" value="UniProtKB-UniRule"/>
</dbReference>
<dbReference type="GO" id="GO:0008270">
    <property type="term" value="F:zinc ion binding"/>
    <property type="evidence" value="ECO:0007669"/>
    <property type="project" value="UniProtKB-UniRule"/>
</dbReference>
<dbReference type="GO" id="GO:0043171">
    <property type="term" value="P:peptide catabolic process"/>
    <property type="evidence" value="ECO:0007669"/>
    <property type="project" value="UniProtKB-UniRule"/>
</dbReference>
<dbReference type="GO" id="GO:0006508">
    <property type="term" value="P:proteolysis"/>
    <property type="evidence" value="ECO:0007669"/>
    <property type="project" value="UniProtKB-UniRule"/>
</dbReference>
<dbReference type="CDD" id="cd03892">
    <property type="entry name" value="M20_peptT"/>
    <property type="match status" value="1"/>
</dbReference>
<dbReference type="FunFam" id="3.30.70.360:FF:000002">
    <property type="entry name" value="Peptidase T"/>
    <property type="match status" value="1"/>
</dbReference>
<dbReference type="Gene3D" id="3.30.70.360">
    <property type="match status" value="1"/>
</dbReference>
<dbReference type="Gene3D" id="3.40.630.10">
    <property type="entry name" value="Zn peptidases"/>
    <property type="match status" value="1"/>
</dbReference>
<dbReference type="HAMAP" id="MF_00550">
    <property type="entry name" value="Aminopeptidase_M20"/>
    <property type="match status" value="1"/>
</dbReference>
<dbReference type="InterPro" id="IPR001261">
    <property type="entry name" value="ArgE/DapE_CS"/>
</dbReference>
<dbReference type="InterPro" id="IPR036264">
    <property type="entry name" value="Bact_exopeptidase_dim_dom"/>
</dbReference>
<dbReference type="InterPro" id="IPR002933">
    <property type="entry name" value="Peptidase_M20"/>
</dbReference>
<dbReference type="InterPro" id="IPR011650">
    <property type="entry name" value="Peptidase_M20_dimer"/>
</dbReference>
<dbReference type="InterPro" id="IPR010161">
    <property type="entry name" value="Peptidase_M20B"/>
</dbReference>
<dbReference type="NCBIfam" id="TIGR01882">
    <property type="entry name" value="peptidase-T"/>
    <property type="match status" value="1"/>
</dbReference>
<dbReference type="NCBIfam" id="NF003976">
    <property type="entry name" value="PRK05469.1"/>
    <property type="match status" value="1"/>
</dbReference>
<dbReference type="NCBIfam" id="NF009920">
    <property type="entry name" value="PRK13381.1"/>
    <property type="match status" value="1"/>
</dbReference>
<dbReference type="PANTHER" id="PTHR42994">
    <property type="entry name" value="PEPTIDASE T"/>
    <property type="match status" value="1"/>
</dbReference>
<dbReference type="PANTHER" id="PTHR42994:SF1">
    <property type="entry name" value="PEPTIDASE T"/>
    <property type="match status" value="1"/>
</dbReference>
<dbReference type="Pfam" id="PF07687">
    <property type="entry name" value="M20_dimer"/>
    <property type="match status" value="1"/>
</dbReference>
<dbReference type="Pfam" id="PF01546">
    <property type="entry name" value="Peptidase_M20"/>
    <property type="match status" value="1"/>
</dbReference>
<dbReference type="PIRSF" id="PIRSF037215">
    <property type="entry name" value="Peptidase_M20B"/>
    <property type="match status" value="1"/>
</dbReference>
<dbReference type="SUPFAM" id="SSF55031">
    <property type="entry name" value="Bacterial exopeptidase dimerisation domain"/>
    <property type="match status" value="1"/>
</dbReference>
<dbReference type="SUPFAM" id="SSF53187">
    <property type="entry name" value="Zn-dependent exopeptidases"/>
    <property type="match status" value="1"/>
</dbReference>
<dbReference type="PROSITE" id="PS00758">
    <property type="entry name" value="ARGE_DAPE_CPG2_1"/>
    <property type="match status" value="1"/>
</dbReference>
<dbReference type="PROSITE" id="PS00759">
    <property type="entry name" value="ARGE_DAPE_CPG2_2"/>
    <property type="match status" value="1"/>
</dbReference>
<organism>
    <name type="scientific">Escherichia coli O9:H4 (strain HS)</name>
    <dbReference type="NCBI Taxonomy" id="331112"/>
    <lineage>
        <taxon>Bacteria</taxon>
        <taxon>Pseudomonadati</taxon>
        <taxon>Pseudomonadota</taxon>
        <taxon>Gammaproteobacteria</taxon>
        <taxon>Enterobacterales</taxon>
        <taxon>Enterobacteriaceae</taxon>
        <taxon>Escherichia</taxon>
    </lineage>
</organism>
<reference key="1">
    <citation type="journal article" date="2008" name="J. Bacteriol.">
        <title>The pangenome structure of Escherichia coli: comparative genomic analysis of E. coli commensal and pathogenic isolates.</title>
        <authorList>
            <person name="Rasko D.A."/>
            <person name="Rosovitz M.J."/>
            <person name="Myers G.S.A."/>
            <person name="Mongodin E.F."/>
            <person name="Fricke W.F."/>
            <person name="Gajer P."/>
            <person name="Crabtree J."/>
            <person name="Sebaihia M."/>
            <person name="Thomson N.R."/>
            <person name="Chaudhuri R."/>
            <person name="Henderson I.R."/>
            <person name="Sperandio V."/>
            <person name="Ravel J."/>
        </authorList>
    </citation>
    <scope>NUCLEOTIDE SEQUENCE [LARGE SCALE GENOMIC DNA]</scope>
    <source>
        <strain>HS</strain>
    </source>
</reference>